<evidence type="ECO:0000255" key="1">
    <source>
        <dbReference type="HAMAP-Rule" id="MF_01635"/>
    </source>
</evidence>
<reference key="1">
    <citation type="journal article" date="2006" name="PLoS Genet.">
        <title>The complete genome sequence and comparative genome analysis of the high pathogenicity Yersinia enterocolitica strain 8081.</title>
        <authorList>
            <person name="Thomson N.R."/>
            <person name="Howard S."/>
            <person name="Wren B.W."/>
            <person name="Holden M.T.G."/>
            <person name="Crossman L."/>
            <person name="Challis G.L."/>
            <person name="Churcher C."/>
            <person name="Mungall K."/>
            <person name="Brooks K."/>
            <person name="Chillingworth T."/>
            <person name="Feltwell T."/>
            <person name="Abdellah Z."/>
            <person name="Hauser H."/>
            <person name="Jagels K."/>
            <person name="Maddison M."/>
            <person name="Moule S."/>
            <person name="Sanders M."/>
            <person name="Whitehead S."/>
            <person name="Quail M.A."/>
            <person name="Dougan G."/>
            <person name="Parkhill J."/>
            <person name="Prentice M.B."/>
        </authorList>
    </citation>
    <scope>NUCLEOTIDE SEQUENCE [LARGE SCALE GENOMIC DNA]</scope>
    <source>
        <strain>NCTC 13174 / 8081</strain>
    </source>
</reference>
<protein>
    <recommendedName>
        <fullName evidence="1">4-hydroxybenzoate octaprenyltransferase</fullName>
        <ecNumber evidence="1">2.5.1.39</ecNumber>
    </recommendedName>
    <alternativeName>
        <fullName evidence="1">4-HB polyprenyltransferase</fullName>
    </alternativeName>
</protein>
<comment type="function">
    <text evidence="1">Catalyzes the prenylation of para-hydroxybenzoate (PHB) with an all-trans polyprenyl group. Mediates the second step in the final reaction sequence of ubiquinone-8 (UQ-8) biosynthesis, which is the condensation of the polyisoprenoid side chain with PHB, generating the first membrane-bound Q intermediate 3-octaprenyl-4-hydroxybenzoate.</text>
</comment>
<comment type="catalytic activity">
    <reaction evidence="1">
        <text>all-trans-octaprenyl diphosphate + 4-hydroxybenzoate = 4-hydroxy-3-(all-trans-octaprenyl)benzoate + diphosphate</text>
        <dbReference type="Rhea" id="RHEA:27782"/>
        <dbReference type="ChEBI" id="CHEBI:1617"/>
        <dbReference type="ChEBI" id="CHEBI:17879"/>
        <dbReference type="ChEBI" id="CHEBI:33019"/>
        <dbReference type="ChEBI" id="CHEBI:57711"/>
        <dbReference type="EC" id="2.5.1.39"/>
    </reaction>
</comment>
<comment type="cofactor">
    <cofactor evidence="1">
        <name>Mg(2+)</name>
        <dbReference type="ChEBI" id="CHEBI:18420"/>
    </cofactor>
</comment>
<comment type="pathway">
    <text evidence="1">Cofactor biosynthesis; ubiquinone biosynthesis.</text>
</comment>
<comment type="subcellular location">
    <subcellularLocation>
        <location evidence="1">Cell inner membrane</location>
        <topology evidence="1">Multi-pass membrane protein</topology>
    </subcellularLocation>
</comment>
<comment type="similarity">
    <text evidence="1">Belongs to the UbiA prenyltransferase family.</text>
</comment>
<name>UBIA_YERE8</name>
<proteinExistence type="inferred from homology"/>
<accession>A1JRU3</accession>
<keyword id="KW-0997">Cell inner membrane</keyword>
<keyword id="KW-1003">Cell membrane</keyword>
<keyword id="KW-0460">Magnesium</keyword>
<keyword id="KW-0472">Membrane</keyword>
<keyword id="KW-0808">Transferase</keyword>
<keyword id="KW-0812">Transmembrane</keyword>
<keyword id="KW-1133">Transmembrane helix</keyword>
<keyword id="KW-0831">Ubiquinone biosynthesis</keyword>
<feature type="chain" id="PRO_1000069837" description="4-hydroxybenzoate octaprenyltransferase">
    <location>
        <begin position="1"/>
        <end position="288"/>
    </location>
</feature>
<feature type="transmembrane region" description="Helical" evidence="1">
    <location>
        <begin position="23"/>
        <end position="43"/>
    </location>
</feature>
<feature type="transmembrane region" description="Helical" evidence="1">
    <location>
        <begin position="46"/>
        <end position="66"/>
    </location>
</feature>
<feature type="transmembrane region" description="Helical" evidence="1">
    <location>
        <begin position="98"/>
        <end position="118"/>
    </location>
</feature>
<feature type="transmembrane region" description="Helical" evidence="1">
    <location>
        <begin position="141"/>
        <end position="161"/>
    </location>
</feature>
<feature type="transmembrane region" description="Helical" evidence="1">
    <location>
        <begin position="165"/>
        <end position="185"/>
    </location>
</feature>
<feature type="transmembrane region" description="Helical" evidence="1">
    <location>
        <begin position="213"/>
        <end position="233"/>
    </location>
</feature>
<feature type="transmembrane region" description="Helical" evidence="1">
    <location>
        <begin position="234"/>
        <end position="254"/>
    </location>
</feature>
<feature type="transmembrane region" description="Helical" evidence="1">
    <location>
        <begin position="268"/>
        <end position="288"/>
    </location>
</feature>
<organism>
    <name type="scientific">Yersinia enterocolitica serotype O:8 / biotype 1B (strain NCTC 13174 / 8081)</name>
    <dbReference type="NCBI Taxonomy" id="393305"/>
    <lineage>
        <taxon>Bacteria</taxon>
        <taxon>Pseudomonadati</taxon>
        <taxon>Pseudomonadota</taxon>
        <taxon>Gammaproteobacteria</taxon>
        <taxon>Enterobacterales</taxon>
        <taxon>Yersiniaceae</taxon>
        <taxon>Yersinia</taxon>
    </lineage>
</organism>
<sequence>MKGSEFQSKWRAYCRLMRIDKPIGSLLLLWPTLWALWLAGKGIPDTKILIVFVLGVFFMRAAGCVVNDYADRRIDGFVKRTASRPLPSGLISERESKILFVVLVLLSFGLVLTLNSMTIWLSLAALALAWVYPFMKRVTHLPQVVLGAAFGWSIPMGFAAVSENLPLVCWLLLLANICWTVAYDTQYAMVDRDDDLKIGVKSTAILFGQQDKLIIGLLQLATLVLMVTIGWLMNLGGAFYWSILLAGALFVHQQKMIAGRERDPCFRAFLNNNYVGLVLFLGIFISYL</sequence>
<dbReference type="EC" id="2.5.1.39" evidence="1"/>
<dbReference type="EMBL" id="AM286415">
    <property type="protein sequence ID" value="CAL13880.1"/>
    <property type="molecule type" value="Genomic_DNA"/>
</dbReference>
<dbReference type="RefSeq" id="WP_011817300.1">
    <property type="nucleotide sequence ID" value="NC_008800.1"/>
</dbReference>
<dbReference type="RefSeq" id="YP_001008006.1">
    <property type="nucleotide sequence ID" value="NC_008800.1"/>
</dbReference>
<dbReference type="SMR" id="A1JRU3"/>
<dbReference type="KEGG" id="yen:YE3858"/>
<dbReference type="PATRIC" id="fig|393305.7.peg.4109"/>
<dbReference type="eggNOG" id="COG0382">
    <property type="taxonomic scope" value="Bacteria"/>
</dbReference>
<dbReference type="HOGENOM" id="CLU_034879_1_0_6"/>
<dbReference type="OrthoDB" id="9782418at2"/>
<dbReference type="UniPathway" id="UPA00232"/>
<dbReference type="Proteomes" id="UP000000642">
    <property type="component" value="Chromosome"/>
</dbReference>
<dbReference type="GO" id="GO:0005886">
    <property type="term" value="C:plasma membrane"/>
    <property type="evidence" value="ECO:0007669"/>
    <property type="project" value="UniProtKB-SubCell"/>
</dbReference>
<dbReference type="GO" id="GO:0008412">
    <property type="term" value="F:4-hydroxybenzoate polyprenyltransferase activity"/>
    <property type="evidence" value="ECO:0007669"/>
    <property type="project" value="UniProtKB-UniRule"/>
</dbReference>
<dbReference type="GO" id="GO:0006744">
    <property type="term" value="P:ubiquinone biosynthetic process"/>
    <property type="evidence" value="ECO:0007669"/>
    <property type="project" value="UniProtKB-UniRule"/>
</dbReference>
<dbReference type="CDD" id="cd13959">
    <property type="entry name" value="PT_UbiA_COQ2"/>
    <property type="match status" value="1"/>
</dbReference>
<dbReference type="FunFam" id="1.10.357.140:FF:000002">
    <property type="entry name" value="4-hydroxybenzoate octaprenyltransferase"/>
    <property type="match status" value="1"/>
</dbReference>
<dbReference type="FunFam" id="1.20.120.1780:FF:000001">
    <property type="entry name" value="4-hydroxybenzoate octaprenyltransferase"/>
    <property type="match status" value="1"/>
</dbReference>
<dbReference type="Gene3D" id="1.10.357.140">
    <property type="entry name" value="UbiA prenyltransferase"/>
    <property type="match status" value="1"/>
</dbReference>
<dbReference type="Gene3D" id="1.20.120.1780">
    <property type="entry name" value="UbiA prenyltransferase"/>
    <property type="match status" value="1"/>
</dbReference>
<dbReference type="HAMAP" id="MF_01635">
    <property type="entry name" value="UbiA"/>
    <property type="match status" value="1"/>
</dbReference>
<dbReference type="InterPro" id="IPR006370">
    <property type="entry name" value="HB_polyprenyltransferase-like"/>
</dbReference>
<dbReference type="InterPro" id="IPR039653">
    <property type="entry name" value="Prenyltransferase"/>
</dbReference>
<dbReference type="InterPro" id="IPR000537">
    <property type="entry name" value="UbiA_prenyltransferase"/>
</dbReference>
<dbReference type="InterPro" id="IPR030470">
    <property type="entry name" value="UbiA_prenylTrfase_CS"/>
</dbReference>
<dbReference type="InterPro" id="IPR044878">
    <property type="entry name" value="UbiA_sf"/>
</dbReference>
<dbReference type="NCBIfam" id="TIGR01474">
    <property type="entry name" value="ubiA_proteo"/>
    <property type="match status" value="1"/>
</dbReference>
<dbReference type="PANTHER" id="PTHR11048:SF28">
    <property type="entry name" value="4-HYDROXYBENZOATE POLYPRENYLTRANSFERASE, MITOCHONDRIAL"/>
    <property type="match status" value="1"/>
</dbReference>
<dbReference type="PANTHER" id="PTHR11048">
    <property type="entry name" value="PRENYLTRANSFERASES"/>
    <property type="match status" value="1"/>
</dbReference>
<dbReference type="Pfam" id="PF01040">
    <property type="entry name" value="UbiA"/>
    <property type="match status" value="1"/>
</dbReference>
<dbReference type="PROSITE" id="PS00943">
    <property type="entry name" value="UBIA"/>
    <property type="match status" value="1"/>
</dbReference>
<gene>
    <name evidence="1" type="primary">ubiA</name>
    <name type="ordered locus">YE3858</name>
</gene>